<gene>
    <name evidence="1" type="primary">rpsK</name>
    <name type="ordered locus">DvMF_0103</name>
</gene>
<keyword id="KW-0687">Ribonucleoprotein</keyword>
<keyword id="KW-0689">Ribosomal protein</keyword>
<keyword id="KW-0694">RNA-binding</keyword>
<keyword id="KW-0699">rRNA-binding</keyword>
<proteinExistence type="inferred from homology"/>
<reference key="1">
    <citation type="submission" date="2008-10" db="EMBL/GenBank/DDBJ databases">
        <title>Complete sequence of Desulfovibrio vulgaris str. 'Miyazaki F'.</title>
        <authorList>
            <person name="Lucas S."/>
            <person name="Copeland A."/>
            <person name="Lapidus A."/>
            <person name="Glavina del Rio T."/>
            <person name="Dalin E."/>
            <person name="Tice H."/>
            <person name="Bruce D."/>
            <person name="Goodwin L."/>
            <person name="Pitluck S."/>
            <person name="Sims D."/>
            <person name="Brettin T."/>
            <person name="Detter J.C."/>
            <person name="Han C."/>
            <person name="Larimer F."/>
            <person name="Land M."/>
            <person name="Hauser L."/>
            <person name="Kyrpides N."/>
            <person name="Mikhailova N."/>
            <person name="Hazen T.C."/>
            <person name="Richardson P."/>
        </authorList>
    </citation>
    <scope>NUCLEOTIDE SEQUENCE [LARGE SCALE GENOMIC DNA]</scope>
    <source>
        <strain>DSM 19637 / Miyazaki F</strain>
    </source>
</reference>
<protein>
    <recommendedName>
        <fullName evidence="1">Small ribosomal subunit protein uS11</fullName>
    </recommendedName>
    <alternativeName>
        <fullName evidence="2">30S ribosomal protein S11</fullName>
    </alternativeName>
</protein>
<feature type="chain" id="PRO_1000141084" description="Small ribosomal subunit protein uS11">
    <location>
        <begin position="1"/>
        <end position="129"/>
    </location>
</feature>
<organism>
    <name type="scientific">Nitratidesulfovibrio vulgaris (strain DSM 19637 / Miyazaki F)</name>
    <name type="common">Desulfovibrio vulgaris</name>
    <dbReference type="NCBI Taxonomy" id="883"/>
    <lineage>
        <taxon>Bacteria</taxon>
        <taxon>Pseudomonadati</taxon>
        <taxon>Thermodesulfobacteriota</taxon>
        <taxon>Desulfovibrionia</taxon>
        <taxon>Desulfovibrionales</taxon>
        <taxon>Desulfovibrionaceae</taxon>
        <taxon>Nitratidesulfovibrio</taxon>
    </lineage>
</organism>
<accession>B8DNK7</accession>
<comment type="function">
    <text evidence="1">Located on the platform of the 30S subunit, it bridges several disparate RNA helices of the 16S rRNA. Forms part of the Shine-Dalgarno cleft in the 70S ribosome.</text>
</comment>
<comment type="subunit">
    <text evidence="1">Part of the 30S ribosomal subunit. Interacts with proteins S7 and S18. Binds to IF-3.</text>
</comment>
<comment type="similarity">
    <text evidence="1">Belongs to the universal ribosomal protein uS11 family.</text>
</comment>
<name>RS11_NITV9</name>
<sequence>MARPKRTVKKKEKKNVPVGIVHIQATFNNTIVTFTDTRGNTISWASAGQSGFKGSRKSTPFAAQVAAEQAAKRAQDHGMRTVGIYVKGPGSGREAAMRAVNAAGFKVAFIRDITPIPHNGCRPPKRRRV</sequence>
<evidence type="ECO:0000255" key="1">
    <source>
        <dbReference type="HAMAP-Rule" id="MF_01310"/>
    </source>
</evidence>
<evidence type="ECO:0000305" key="2"/>
<dbReference type="EMBL" id="CP001197">
    <property type="protein sequence ID" value="ACL07064.1"/>
    <property type="molecule type" value="Genomic_DNA"/>
</dbReference>
<dbReference type="SMR" id="B8DNK7"/>
<dbReference type="STRING" id="883.DvMF_0103"/>
<dbReference type="KEGG" id="dvm:DvMF_0103"/>
<dbReference type="eggNOG" id="COG0100">
    <property type="taxonomic scope" value="Bacteria"/>
</dbReference>
<dbReference type="HOGENOM" id="CLU_072439_5_0_7"/>
<dbReference type="OrthoDB" id="9806415at2"/>
<dbReference type="GO" id="GO:1990904">
    <property type="term" value="C:ribonucleoprotein complex"/>
    <property type="evidence" value="ECO:0007669"/>
    <property type="project" value="UniProtKB-KW"/>
</dbReference>
<dbReference type="GO" id="GO:0005840">
    <property type="term" value="C:ribosome"/>
    <property type="evidence" value="ECO:0007669"/>
    <property type="project" value="UniProtKB-KW"/>
</dbReference>
<dbReference type="GO" id="GO:0019843">
    <property type="term" value="F:rRNA binding"/>
    <property type="evidence" value="ECO:0007669"/>
    <property type="project" value="UniProtKB-UniRule"/>
</dbReference>
<dbReference type="GO" id="GO:0003735">
    <property type="term" value="F:structural constituent of ribosome"/>
    <property type="evidence" value="ECO:0007669"/>
    <property type="project" value="InterPro"/>
</dbReference>
<dbReference type="GO" id="GO:0006412">
    <property type="term" value="P:translation"/>
    <property type="evidence" value="ECO:0007669"/>
    <property type="project" value="UniProtKB-UniRule"/>
</dbReference>
<dbReference type="FunFam" id="3.30.420.80:FF:000001">
    <property type="entry name" value="30S ribosomal protein S11"/>
    <property type="match status" value="1"/>
</dbReference>
<dbReference type="Gene3D" id="3.30.420.80">
    <property type="entry name" value="Ribosomal protein S11"/>
    <property type="match status" value="1"/>
</dbReference>
<dbReference type="HAMAP" id="MF_01310">
    <property type="entry name" value="Ribosomal_uS11"/>
    <property type="match status" value="1"/>
</dbReference>
<dbReference type="InterPro" id="IPR001971">
    <property type="entry name" value="Ribosomal_uS11"/>
</dbReference>
<dbReference type="InterPro" id="IPR019981">
    <property type="entry name" value="Ribosomal_uS11_bac-type"/>
</dbReference>
<dbReference type="InterPro" id="IPR018102">
    <property type="entry name" value="Ribosomal_uS11_CS"/>
</dbReference>
<dbReference type="InterPro" id="IPR036967">
    <property type="entry name" value="Ribosomal_uS11_sf"/>
</dbReference>
<dbReference type="NCBIfam" id="NF003698">
    <property type="entry name" value="PRK05309.1"/>
    <property type="match status" value="1"/>
</dbReference>
<dbReference type="NCBIfam" id="TIGR03632">
    <property type="entry name" value="uS11_bact"/>
    <property type="match status" value="1"/>
</dbReference>
<dbReference type="PANTHER" id="PTHR11759">
    <property type="entry name" value="40S RIBOSOMAL PROTEIN S14/30S RIBOSOMAL PROTEIN S11"/>
    <property type="match status" value="1"/>
</dbReference>
<dbReference type="Pfam" id="PF00411">
    <property type="entry name" value="Ribosomal_S11"/>
    <property type="match status" value="1"/>
</dbReference>
<dbReference type="PIRSF" id="PIRSF002131">
    <property type="entry name" value="Ribosomal_S11"/>
    <property type="match status" value="1"/>
</dbReference>
<dbReference type="SUPFAM" id="SSF53137">
    <property type="entry name" value="Translational machinery components"/>
    <property type="match status" value="1"/>
</dbReference>
<dbReference type="PROSITE" id="PS00054">
    <property type="entry name" value="RIBOSOMAL_S11"/>
    <property type="match status" value="1"/>
</dbReference>